<protein>
    <recommendedName>
        <fullName evidence="5">Steroid 3-ketoacyl-CoA thiolase FadA6</fullName>
        <ecNumber evidence="2">2.3.1.16</ecNumber>
    </recommendedName>
    <alternativeName>
        <fullName evidence="5">Acetyl-CoA acetyltransferase FadA6</fullName>
    </alternativeName>
</protein>
<proteinExistence type="evidence at protein level"/>
<name>FADA6_MYCTU</name>
<accession>I6XHJ3</accession>
<dbReference type="EC" id="2.3.1.16" evidence="2"/>
<dbReference type="EMBL" id="AL123456">
    <property type="protein sequence ID" value="CCP46378.1"/>
    <property type="status" value="ALT_INIT"/>
    <property type="molecule type" value="Genomic_DNA"/>
</dbReference>
<dbReference type="RefSeq" id="NP_218073.1">
    <property type="nucleotide sequence ID" value="NC_000962.3"/>
</dbReference>
<dbReference type="SMR" id="I6XHJ3"/>
<dbReference type="FunCoup" id="I6XHJ3">
    <property type="interactions" value="231"/>
</dbReference>
<dbReference type="STRING" id="83332.Rv3556c"/>
<dbReference type="PaxDb" id="83332-Rv3556c"/>
<dbReference type="DNASU" id="887285"/>
<dbReference type="GeneID" id="887285"/>
<dbReference type="KEGG" id="mtu:Rv3556c"/>
<dbReference type="PATRIC" id="fig|83332.111.peg.3961"/>
<dbReference type="TubercuList" id="Rv3556c"/>
<dbReference type="eggNOG" id="COG0183">
    <property type="taxonomic scope" value="Bacteria"/>
</dbReference>
<dbReference type="InParanoid" id="I6XHJ3"/>
<dbReference type="OrthoDB" id="9764638at2"/>
<dbReference type="PhylomeDB" id="I6XHJ3"/>
<dbReference type="BioCyc" id="MetaCyc:G185E-7833-MONOMER"/>
<dbReference type="SABIO-RK" id="I6XHJ3"/>
<dbReference type="UniPathway" id="UPA01058"/>
<dbReference type="Proteomes" id="UP000001584">
    <property type="component" value="Chromosome"/>
</dbReference>
<dbReference type="GO" id="GO:0003988">
    <property type="term" value="F:acetyl-CoA C-acyltransferase activity"/>
    <property type="evidence" value="ECO:0007669"/>
    <property type="project" value="UniProtKB-EC"/>
</dbReference>
<dbReference type="GO" id="GO:0006707">
    <property type="term" value="P:cholesterol catabolic process"/>
    <property type="evidence" value="ECO:0007669"/>
    <property type="project" value="UniProtKB-UniPathway"/>
</dbReference>
<dbReference type="CDD" id="cd00751">
    <property type="entry name" value="thiolase"/>
    <property type="match status" value="1"/>
</dbReference>
<dbReference type="FunFam" id="3.40.47.10:FF:000047">
    <property type="entry name" value="Acetyl-CoA acetyltransferase FadA6"/>
    <property type="match status" value="1"/>
</dbReference>
<dbReference type="Gene3D" id="3.40.47.10">
    <property type="match status" value="1"/>
</dbReference>
<dbReference type="InterPro" id="IPR002155">
    <property type="entry name" value="Thiolase"/>
</dbReference>
<dbReference type="InterPro" id="IPR016039">
    <property type="entry name" value="Thiolase-like"/>
</dbReference>
<dbReference type="InterPro" id="IPR020617">
    <property type="entry name" value="Thiolase_C"/>
</dbReference>
<dbReference type="InterPro" id="IPR020613">
    <property type="entry name" value="Thiolase_CS"/>
</dbReference>
<dbReference type="InterPro" id="IPR020616">
    <property type="entry name" value="Thiolase_N"/>
</dbReference>
<dbReference type="NCBIfam" id="TIGR01930">
    <property type="entry name" value="AcCoA-C-Actrans"/>
    <property type="match status" value="1"/>
</dbReference>
<dbReference type="NCBIfam" id="NF005865">
    <property type="entry name" value="PRK07801.1"/>
    <property type="match status" value="1"/>
</dbReference>
<dbReference type="PANTHER" id="PTHR43365:SF1">
    <property type="entry name" value="ACETYL-COA C-ACYLTRANSFERASE"/>
    <property type="match status" value="1"/>
</dbReference>
<dbReference type="PANTHER" id="PTHR43365">
    <property type="entry name" value="BLR7806 PROTEIN"/>
    <property type="match status" value="1"/>
</dbReference>
<dbReference type="Pfam" id="PF02803">
    <property type="entry name" value="Thiolase_C"/>
    <property type="match status" value="1"/>
</dbReference>
<dbReference type="Pfam" id="PF00108">
    <property type="entry name" value="Thiolase_N"/>
    <property type="match status" value="1"/>
</dbReference>
<dbReference type="PIRSF" id="PIRSF000429">
    <property type="entry name" value="Ac-CoA_Ac_transf"/>
    <property type="match status" value="1"/>
</dbReference>
<dbReference type="SUPFAM" id="SSF53901">
    <property type="entry name" value="Thiolase-like"/>
    <property type="match status" value="2"/>
</dbReference>
<dbReference type="PROSITE" id="PS00737">
    <property type="entry name" value="THIOLASE_2"/>
    <property type="match status" value="1"/>
</dbReference>
<sequence length="407" mass="42981">MPRVDDDAVGVPLTGNGRGAVMTEAYVIDAVRTAVGKRGGALAGIHPVDLGALAWRGLLDRTDIDPAAVDDVIAGCVDAIGGQAGNIARLSWLAAGYPEEVPGVTVDRQCGSSQQAISFGAQAIMSGTADVIVAGGVQNMSQIPISSAMTVGEQFGFTSPTNESKQWLHRYGDQEISQFRGSELIAEKWNLSREEMERYSLTSHERAFAAIRAGHFENEIITVETESGPFRVDEGPRESSLEKMAGLQPLVEGGRLTAAMASQISDGASAVLLASERAVKDHGLRPRARIHHISARAADPVFMLTGPIPATRYALDKTGLAIDDIDTVEINEAFAPVVMAWLKEIKADPAKVNPNGGAIALGHPLGATGAKLFTTMLGELERIGGRYGLQTMCEGGGTANVTIIERL</sequence>
<comment type="function">
    <text evidence="2 6">May be involved in the final steps of cholesterol and steroid degradation (PubMed:28377529). Catalyzes the formation of 4-methyl-5-oxo-octanedioyl-CoA (MOODA-CoA) and acetyl-CoA from 6-methyl-3,7-dioxodecanedioyl-CoA (MeDODA-CoA) and coenzyme A (Probable).</text>
</comment>
<comment type="catalytic activity">
    <reaction evidence="6">
        <text>an acyl-CoA + acetyl-CoA = a 3-oxoacyl-CoA + CoA</text>
        <dbReference type="Rhea" id="RHEA:21564"/>
        <dbReference type="ChEBI" id="CHEBI:57287"/>
        <dbReference type="ChEBI" id="CHEBI:57288"/>
        <dbReference type="ChEBI" id="CHEBI:58342"/>
        <dbReference type="ChEBI" id="CHEBI:90726"/>
        <dbReference type="EC" id="2.3.1.16"/>
    </reaction>
    <physiologicalReaction direction="right-to-left" evidence="6">
        <dbReference type="Rhea" id="RHEA:21566"/>
    </physiologicalReaction>
</comment>
<comment type="catalytic activity">
    <reaction evidence="2">
        <text>6-methyl-3,7-dioxodecanedioyl-CoA + CoA = 4-methyl-5-oxo-octanedioyl-CoA + acetyl-CoA</text>
        <dbReference type="Rhea" id="RHEA:66368"/>
        <dbReference type="ChEBI" id="CHEBI:57287"/>
        <dbReference type="ChEBI" id="CHEBI:57288"/>
        <dbReference type="ChEBI" id="CHEBI:167102"/>
        <dbReference type="ChEBI" id="CHEBI:167103"/>
    </reaction>
    <physiologicalReaction direction="left-to-right" evidence="2">
        <dbReference type="Rhea" id="RHEA:66369"/>
    </physiologicalReaction>
</comment>
<comment type="biophysicochemical properties">
    <kinetics>
        <KM evidence="2">300 uM for acetoacetyl-CoA</KM>
        <text evidence="2">kcat is 4.8 sec(-1) with acetoacetyl-CoA as substrate.</text>
    </kinetics>
</comment>
<comment type="pathway">
    <text evidence="2">Steroid metabolism; cholesterol degradation.</text>
</comment>
<comment type="miscellaneous">
    <text evidence="2">Turnover of MeDODA-CoA is low and FadA6 may not be the physiological thiolase responsible for MOODA-CoA formation.</text>
</comment>
<comment type="similarity">
    <text evidence="5">Belongs to the thiolase-like superfamily. Thiolase family.</text>
</comment>
<comment type="sequence caution" evidence="3">
    <conflict type="erroneous initiation">
        <sequence resource="EMBL-CDS" id="CCP46378"/>
    </conflict>
    <text>Truncated N-terminus.</text>
</comment>
<organism>
    <name type="scientific">Mycobacterium tuberculosis (strain ATCC 25618 / H37Rv)</name>
    <dbReference type="NCBI Taxonomy" id="83332"/>
    <lineage>
        <taxon>Bacteria</taxon>
        <taxon>Bacillati</taxon>
        <taxon>Actinomycetota</taxon>
        <taxon>Actinomycetes</taxon>
        <taxon>Mycobacteriales</taxon>
        <taxon>Mycobacteriaceae</taxon>
        <taxon>Mycobacterium</taxon>
        <taxon>Mycobacterium tuberculosis complex</taxon>
    </lineage>
</organism>
<evidence type="ECO:0000250" key="1">
    <source>
        <dbReference type="UniProtKB" id="I6XHI4"/>
    </source>
</evidence>
<evidence type="ECO:0000269" key="2">
    <source>
    </source>
</evidence>
<evidence type="ECO:0000269" key="3">
    <source>
    </source>
</evidence>
<evidence type="ECO:0000303" key="4">
    <source>
    </source>
</evidence>
<evidence type="ECO:0000305" key="5"/>
<evidence type="ECO:0000305" key="6">
    <source>
    </source>
</evidence>
<evidence type="ECO:0000312" key="7">
    <source>
        <dbReference type="EMBL" id="CCP46378.1"/>
    </source>
</evidence>
<feature type="chain" id="PRO_0000452312" description="Steroid 3-ketoacyl-CoA thiolase FadA6">
    <location>
        <begin position="1"/>
        <end position="407"/>
    </location>
</feature>
<feature type="active site" description="Acyl-thioester intermediate" evidence="1">
    <location>
        <position position="110"/>
    </location>
</feature>
<feature type="active site" description="Proton acceptor" evidence="1">
    <location>
        <position position="363"/>
    </location>
</feature>
<feature type="active site" description="Proton acceptor" evidence="1">
    <location>
        <position position="393"/>
    </location>
</feature>
<feature type="binding site" evidence="1">
    <location>
        <position position="178"/>
    </location>
    <ligand>
        <name>CoA</name>
        <dbReference type="ChEBI" id="CHEBI:57287"/>
    </ligand>
</feature>
<feature type="binding site" evidence="1">
    <location>
        <begin position="237"/>
        <end position="239"/>
    </location>
    <ligand>
        <name>CoA</name>
        <dbReference type="ChEBI" id="CHEBI:57287"/>
    </ligand>
</feature>
<feature type="binding site" evidence="1">
    <location>
        <position position="262"/>
    </location>
    <ligand>
        <name>CoA</name>
        <dbReference type="ChEBI" id="CHEBI:57287"/>
    </ligand>
</feature>
<feature type="binding site" evidence="1">
    <location>
        <position position="395"/>
    </location>
    <ligand>
        <name>substrate</name>
    </ligand>
</feature>
<keyword id="KW-0012">Acyltransferase</keyword>
<keyword id="KW-0153">Cholesterol metabolism</keyword>
<keyword id="KW-0903">Direct protein sequencing</keyword>
<keyword id="KW-0443">Lipid metabolism</keyword>
<keyword id="KW-1185">Reference proteome</keyword>
<keyword id="KW-0753">Steroid metabolism</keyword>
<keyword id="KW-1207">Sterol metabolism</keyword>
<keyword id="KW-0808">Transferase</keyword>
<gene>
    <name evidence="4" type="primary">fadA6</name>
    <name evidence="7" type="ordered locus">Rv3556c</name>
</gene>
<reference key="1">
    <citation type="journal article" date="1998" name="Nature">
        <title>Deciphering the biology of Mycobacterium tuberculosis from the complete genome sequence.</title>
        <authorList>
            <person name="Cole S.T."/>
            <person name="Brosch R."/>
            <person name="Parkhill J."/>
            <person name="Garnier T."/>
            <person name="Churcher C.M."/>
            <person name="Harris D.E."/>
            <person name="Gordon S.V."/>
            <person name="Eiglmeier K."/>
            <person name="Gas S."/>
            <person name="Barry C.E. III"/>
            <person name="Tekaia F."/>
            <person name="Badcock K."/>
            <person name="Basham D."/>
            <person name="Brown D."/>
            <person name="Chillingworth T."/>
            <person name="Connor R."/>
            <person name="Davies R.M."/>
            <person name="Devlin K."/>
            <person name="Feltwell T."/>
            <person name="Gentles S."/>
            <person name="Hamlin N."/>
            <person name="Holroyd S."/>
            <person name="Hornsby T."/>
            <person name="Jagels K."/>
            <person name="Krogh A."/>
            <person name="McLean J."/>
            <person name="Moule S."/>
            <person name="Murphy L.D."/>
            <person name="Oliver S."/>
            <person name="Osborne J."/>
            <person name="Quail M.A."/>
            <person name="Rajandream M.A."/>
            <person name="Rogers J."/>
            <person name="Rutter S."/>
            <person name="Seeger K."/>
            <person name="Skelton S."/>
            <person name="Squares S."/>
            <person name="Squares R."/>
            <person name="Sulston J.E."/>
            <person name="Taylor K."/>
            <person name="Whitehead S."/>
            <person name="Barrell B.G."/>
        </authorList>
    </citation>
    <scope>NUCLEOTIDE SEQUENCE [LARGE SCALE GENOMIC DNA]</scope>
    <source>
        <strain>ATCC 25618 / H37Rv</strain>
    </source>
</reference>
<reference key="2">
    <citation type="journal article" date="2022" name="Genomics">
        <title>Deep N-terminomics of Mycobacterium tuberculosis H37Rv extensively correct annotated encoding genes.</title>
        <authorList>
            <person name="Shi J."/>
            <person name="Meng S."/>
            <person name="Wan L."/>
            <person name="Zhang Z."/>
            <person name="Jiang S."/>
            <person name="Zhu H."/>
            <person name="Dai E."/>
            <person name="Chang L."/>
            <person name="Gao H."/>
            <person name="Wan K."/>
            <person name="Zhang L."/>
            <person name="Zhao X."/>
            <person name="Liu H."/>
            <person name="Lyu Z."/>
            <person name="Zhang Y."/>
            <person name="Xu P."/>
        </authorList>
    </citation>
    <scope>PROTEIN SEQUENCE OF 32-46</scope>
    <scope>SEQUENCE REVISION TO N-TERMINUS</scope>
    <source>
        <strain>H37Rv</strain>
    </source>
</reference>
<reference key="3">
    <citation type="journal article" date="2011" name="Mol. Cell. Proteomics">
        <title>Proteogenomic analysis of Mycobacterium tuberculosis by high resolution mass spectrometry.</title>
        <authorList>
            <person name="Kelkar D.S."/>
            <person name="Kumar D."/>
            <person name="Kumar P."/>
            <person name="Balakrishnan L."/>
            <person name="Muthusamy B."/>
            <person name="Yadav A.K."/>
            <person name="Shrivastava P."/>
            <person name="Marimuthu A."/>
            <person name="Anand S."/>
            <person name="Sundaram H."/>
            <person name="Kingsbury R."/>
            <person name="Harsha H.C."/>
            <person name="Nair B."/>
            <person name="Prasad T.S."/>
            <person name="Chauhan D.S."/>
            <person name="Katoch K."/>
            <person name="Katoch V.M."/>
            <person name="Kumar P."/>
            <person name="Chaerkady R."/>
            <person name="Ramachandran S."/>
            <person name="Dash D."/>
            <person name="Pandey A."/>
        </authorList>
    </citation>
    <scope>IDENTIFICATION BY MASS SPECTROMETRY [LARGE SCALE ANALYSIS]</scope>
    <source>
        <strain>ATCC 25618 / H37Rv</strain>
    </source>
</reference>
<reference key="4">
    <citation type="journal article" date="2017" name="MBio">
        <title>Catabolism of the last two steroid rings in Mycobacterium tuberculosis and other bacteria.</title>
        <authorList>
            <person name="Crowe A.M."/>
            <person name="Casabon I."/>
            <person name="Brown K.L."/>
            <person name="Liu J."/>
            <person name="Lian J."/>
            <person name="Rogalski J.C."/>
            <person name="Hurst T.E."/>
            <person name="Snieckus V."/>
            <person name="Foster L.J."/>
            <person name="Eltis L.D."/>
        </authorList>
    </citation>
    <scope>FUNCTION</scope>
    <scope>CATALYTIC ACTIVITY</scope>
    <scope>BIOPHYSICOCHEMICAL PROPERTIES</scope>
    <scope>PATHWAY</scope>
    <source>
        <strain>Erdman</strain>
    </source>
</reference>